<name>RUVB_MYCPA</name>
<organism>
    <name type="scientific">Mycolicibacterium paratuberculosis (strain ATCC BAA-968 / K-10)</name>
    <name type="common">Mycobacterium paratuberculosis</name>
    <dbReference type="NCBI Taxonomy" id="262316"/>
    <lineage>
        <taxon>Bacteria</taxon>
        <taxon>Bacillati</taxon>
        <taxon>Actinomycetota</taxon>
        <taxon>Actinomycetes</taxon>
        <taxon>Mycobacteriales</taxon>
        <taxon>Mycobacteriaceae</taxon>
        <taxon>Mycobacterium</taxon>
        <taxon>Mycobacterium avium complex (MAC)</taxon>
    </lineage>
</organism>
<reference key="1">
    <citation type="journal article" date="2005" name="Proc. Natl. Acad. Sci. U.S.A.">
        <title>The complete genome sequence of Mycobacterium avium subspecies paratuberculosis.</title>
        <authorList>
            <person name="Li L."/>
            <person name="Bannantine J.P."/>
            <person name="Zhang Q."/>
            <person name="Amonsin A."/>
            <person name="May B.J."/>
            <person name="Alt D."/>
            <person name="Banerji N."/>
            <person name="Kanjilal S."/>
            <person name="Kapur V."/>
        </authorList>
    </citation>
    <scope>NUCLEOTIDE SEQUENCE [LARGE SCALE GENOMIC DNA]</scope>
    <source>
        <strain>ATCC BAA-968 / K-10</strain>
    </source>
</reference>
<gene>
    <name evidence="1" type="primary">ruvB</name>
    <name type="ordered locus">MAP_1038</name>
</gene>
<feature type="chain" id="PRO_0000165559" description="Holliday junction branch migration complex subunit RuvB">
    <location>
        <begin position="1"/>
        <end position="351"/>
    </location>
</feature>
<feature type="region of interest" description="Large ATPase domain (RuvB-L)" evidence="1">
    <location>
        <begin position="1"/>
        <end position="189"/>
    </location>
</feature>
<feature type="region of interest" description="Small ATPAse domain (RuvB-S)" evidence="1">
    <location>
        <begin position="190"/>
        <end position="260"/>
    </location>
</feature>
<feature type="region of interest" description="Head domain (RuvB-H)" evidence="1">
    <location>
        <begin position="263"/>
        <end position="351"/>
    </location>
</feature>
<feature type="binding site" evidence="1">
    <location>
        <position position="28"/>
    </location>
    <ligand>
        <name>ATP</name>
        <dbReference type="ChEBI" id="CHEBI:30616"/>
    </ligand>
</feature>
<feature type="binding site" evidence="1">
    <location>
        <position position="29"/>
    </location>
    <ligand>
        <name>ATP</name>
        <dbReference type="ChEBI" id="CHEBI:30616"/>
    </ligand>
</feature>
<feature type="binding site" evidence="1">
    <location>
        <position position="70"/>
    </location>
    <ligand>
        <name>ATP</name>
        <dbReference type="ChEBI" id="CHEBI:30616"/>
    </ligand>
</feature>
<feature type="binding site" evidence="1">
    <location>
        <position position="73"/>
    </location>
    <ligand>
        <name>ATP</name>
        <dbReference type="ChEBI" id="CHEBI:30616"/>
    </ligand>
</feature>
<feature type="binding site" evidence="1">
    <location>
        <position position="74"/>
    </location>
    <ligand>
        <name>ATP</name>
        <dbReference type="ChEBI" id="CHEBI:30616"/>
    </ligand>
</feature>
<feature type="binding site" evidence="1">
    <location>
        <position position="74"/>
    </location>
    <ligand>
        <name>Mg(2+)</name>
        <dbReference type="ChEBI" id="CHEBI:18420"/>
    </ligand>
</feature>
<feature type="binding site" evidence="1">
    <location>
        <position position="75"/>
    </location>
    <ligand>
        <name>ATP</name>
        <dbReference type="ChEBI" id="CHEBI:30616"/>
    </ligand>
</feature>
<feature type="binding site" evidence="1">
    <location>
        <begin position="136"/>
        <end position="138"/>
    </location>
    <ligand>
        <name>ATP</name>
        <dbReference type="ChEBI" id="CHEBI:30616"/>
    </ligand>
</feature>
<feature type="binding site" evidence="1">
    <location>
        <position position="179"/>
    </location>
    <ligand>
        <name>ATP</name>
        <dbReference type="ChEBI" id="CHEBI:30616"/>
    </ligand>
</feature>
<feature type="binding site" evidence="1">
    <location>
        <position position="189"/>
    </location>
    <ligand>
        <name>ATP</name>
        <dbReference type="ChEBI" id="CHEBI:30616"/>
    </ligand>
</feature>
<feature type="binding site" evidence="1">
    <location>
        <position position="226"/>
    </location>
    <ligand>
        <name>ATP</name>
        <dbReference type="ChEBI" id="CHEBI:30616"/>
    </ligand>
</feature>
<feature type="binding site" evidence="1">
    <location>
        <position position="318"/>
    </location>
    <ligand>
        <name>DNA</name>
        <dbReference type="ChEBI" id="CHEBI:16991"/>
    </ligand>
</feature>
<feature type="binding site" evidence="1">
    <location>
        <position position="323"/>
    </location>
    <ligand>
        <name>DNA</name>
        <dbReference type="ChEBI" id="CHEBI:16991"/>
    </ligand>
</feature>
<protein>
    <recommendedName>
        <fullName evidence="1">Holliday junction branch migration complex subunit RuvB</fullName>
        <ecNumber evidence="1">3.6.4.-</ecNumber>
    </recommendedName>
</protein>
<accession>P61535</accession>
<dbReference type="EC" id="3.6.4.-" evidence="1"/>
<dbReference type="EMBL" id="AE016958">
    <property type="protein sequence ID" value="AAS03355.1"/>
    <property type="molecule type" value="Genomic_DNA"/>
</dbReference>
<dbReference type="RefSeq" id="WP_003872684.1">
    <property type="nucleotide sequence ID" value="NZ_CP106873.1"/>
</dbReference>
<dbReference type="SMR" id="P61535"/>
<dbReference type="STRING" id="262316.MAP_1038"/>
<dbReference type="GeneID" id="75270869"/>
<dbReference type="KEGG" id="mpa:MAP_1038"/>
<dbReference type="eggNOG" id="COG2255">
    <property type="taxonomic scope" value="Bacteria"/>
</dbReference>
<dbReference type="HOGENOM" id="CLU_055599_1_0_11"/>
<dbReference type="Proteomes" id="UP000000580">
    <property type="component" value="Chromosome"/>
</dbReference>
<dbReference type="GO" id="GO:0005737">
    <property type="term" value="C:cytoplasm"/>
    <property type="evidence" value="ECO:0007669"/>
    <property type="project" value="UniProtKB-SubCell"/>
</dbReference>
<dbReference type="GO" id="GO:0048476">
    <property type="term" value="C:Holliday junction resolvase complex"/>
    <property type="evidence" value="ECO:0007669"/>
    <property type="project" value="UniProtKB-UniRule"/>
</dbReference>
<dbReference type="GO" id="GO:0005524">
    <property type="term" value="F:ATP binding"/>
    <property type="evidence" value="ECO:0007669"/>
    <property type="project" value="UniProtKB-UniRule"/>
</dbReference>
<dbReference type="GO" id="GO:0016887">
    <property type="term" value="F:ATP hydrolysis activity"/>
    <property type="evidence" value="ECO:0007669"/>
    <property type="project" value="InterPro"/>
</dbReference>
<dbReference type="GO" id="GO:0000400">
    <property type="term" value="F:four-way junction DNA binding"/>
    <property type="evidence" value="ECO:0007669"/>
    <property type="project" value="UniProtKB-UniRule"/>
</dbReference>
<dbReference type="GO" id="GO:0009378">
    <property type="term" value="F:four-way junction helicase activity"/>
    <property type="evidence" value="ECO:0007669"/>
    <property type="project" value="InterPro"/>
</dbReference>
<dbReference type="GO" id="GO:0006310">
    <property type="term" value="P:DNA recombination"/>
    <property type="evidence" value="ECO:0007669"/>
    <property type="project" value="UniProtKB-UniRule"/>
</dbReference>
<dbReference type="GO" id="GO:0006281">
    <property type="term" value="P:DNA repair"/>
    <property type="evidence" value="ECO:0007669"/>
    <property type="project" value="UniProtKB-UniRule"/>
</dbReference>
<dbReference type="CDD" id="cd00009">
    <property type="entry name" value="AAA"/>
    <property type="match status" value="1"/>
</dbReference>
<dbReference type="Gene3D" id="1.10.8.60">
    <property type="match status" value="1"/>
</dbReference>
<dbReference type="Gene3D" id="3.40.50.300">
    <property type="entry name" value="P-loop containing nucleotide triphosphate hydrolases"/>
    <property type="match status" value="1"/>
</dbReference>
<dbReference type="Gene3D" id="1.10.10.10">
    <property type="entry name" value="Winged helix-like DNA-binding domain superfamily/Winged helix DNA-binding domain"/>
    <property type="match status" value="1"/>
</dbReference>
<dbReference type="HAMAP" id="MF_00016">
    <property type="entry name" value="DNA_HJ_migration_RuvB"/>
    <property type="match status" value="1"/>
</dbReference>
<dbReference type="InterPro" id="IPR003593">
    <property type="entry name" value="AAA+_ATPase"/>
</dbReference>
<dbReference type="InterPro" id="IPR041445">
    <property type="entry name" value="AAA_lid_4"/>
</dbReference>
<dbReference type="InterPro" id="IPR004605">
    <property type="entry name" value="DNA_helicase_Holl-junc_RuvB"/>
</dbReference>
<dbReference type="InterPro" id="IPR027417">
    <property type="entry name" value="P-loop_NTPase"/>
</dbReference>
<dbReference type="InterPro" id="IPR008824">
    <property type="entry name" value="RuvB-like_N"/>
</dbReference>
<dbReference type="InterPro" id="IPR008823">
    <property type="entry name" value="RuvB_C"/>
</dbReference>
<dbReference type="InterPro" id="IPR036388">
    <property type="entry name" value="WH-like_DNA-bd_sf"/>
</dbReference>
<dbReference type="InterPro" id="IPR036390">
    <property type="entry name" value="WH_DNA-bd_sf"/>
</dbReference>
<dbReference type="NCBIfam" id="NF000868">
    <property type="entry name" value="PRK00080.1"/>
    <property type="match status" value="1"/>
</dbReference>
<dbReference type="NCBIfam" id="TIGR00635">
    <property type="entry name" value="ruvB"/>
    <property type="match status" value="1"/>
</dbReference>
<dbReference type="PANTHER" id="PTHR42848">
    <property type="match status" value="1"/>
</dbReference>
<dbReference type="PANTHER" id="PTHR42848:SF1">
    <property type="entry name" value="HOLLIDAY JUNCTION BRANCH MIGRATION COMPLEX SUBUNIT RUVB"/>
    <property type="match status" value="1"/>
</dbReference>
<dbReference type="Pfam" id="PF17864">
    <property type="entry name" value="AAA_lid_4"/>
    <property type="match status" value="1"/>
</dbReference>
<dbReference type="Pfam" id="PF05491">
    <property type="entry name" value="RuvB_C"/>
    <property type="match status" value="1"/>
</dbReference>
<dbReference type="Pfam" id="PF05496">
    <property type="entry name" value="RuvB_N"/>
    <property type="match status" value="1"/>
</dbReference>
<dbReference type="SMART" id="SM00382">
    <property type="entry name" value="AAA"/>
    <property type="match status" value="1"/>
</dbReference>
<dbReference type="SUPFAM" id="SSF52540">
    <property type="entry name" value="P-loop containing nucleoside triphosphate hydrolases"/>
    <property type="match status" value="1"/>
</dbReference>
<dbReference type="SUPFAM" id="SSF46785">
    <property type="entry name" value="Winged helix' DNA-binding domain"/>
    <property type="match status" value="1"/>
</dbReference>
<sequence>MTAHDADWSDRDVSGALVPGEGDIDVSLRPRSLREFIGQPRVREQLQLVIEGAKNRGGTPDHILLSGPPGLGKTSLAMIIAAELGSSLRVTSGPALERAGDLAAMLSNLVEHDVLFIDEIHRIARPAEEMLYLAMEDFRVDVVVGKGPGATSIPLEVAPFTLVGATTRSGALTGPLRDRFGFTAHMDFYEPAELQQVLARSAGILGIELGAEAAEEIARRSRGTPRIANRLLRRVRDFAEVRADGVITRDVAKAALAVYDVDELGLDRLDRAVLTALTRSFGGGPVGVSTLAVAVGEEAATVEEVCEPFLVRAGMVARTPRGRVATAQAWTHLGMVPPAGAAGLGQPGLFD</sequence>
<proteinExistence type="inferred from homology"/>
<keyword id="KW-0067">ATP-binding</keyword>
<keyword id="KW-0963">Cytoplasm</keyword>
<keyword id="KW-0227">DNA damage</keyword>
<keyword id="KW-0233">DNA recombination</keyword>
<keyword id="KW-0234">DNA repair</keyword>
<keyword id="KW-0238">DNA-binding</keyword>
<keyword id="KW-0378">Hydrolase</keyword>
<keyword id="KW-0547">Nucleotide-binding</keyword>
<keyword id="KW-1185">Reference proteome</keyword>
<comment type="function">
    <text evidence="1">The RuvA-RuvB-RuvC complex processes Holliday junction (HJ) DNA during genetic recombination and DNA repair, while the RuvA-RuvB complex plays an important role in the rescue of blocked DNA replication forks via replication fork reversal (RFR). RuvA specifically binds to HJ cruciform DNA, conferring on it an open structure. The RuvB hexamer acts as an ATP-dependent pump, pulling dsDNA into and through the RuvAB complex. RuvB forms 2 homohexamers on either side of HJ DNA bound by 1 or 2 RuvA tetramers; 4 subunits per hexamer contact DNA at a time. Coordinated motions by a converter formed by DNA-disengaged RuvB subunits stimulates ATP hydrolysis and nucleotide exchange. Immobilization of the converter enables RuvB to convert the ATP-contained energy into a lever motion, pulling 2 nucleotides of DNA out of the RuvA tetramer per ATP hydrolyzed, thus driving DNA branch migration. The RuvB motors rotate together with the DNA substrate, which together with the progressing nucleotide cycle form the mechanistic basis for DNA recombination by continuous HJ branch migration. Branch migration allows RuvC to scan DNA until it finds its consensus sequence, where it cleaves and resolves cruciform DNA.</text>
</comment>
<comment type="catalytic activity">
    <reaction evidence="1">
        <text>ATP + H2O = ADP + phosphate + H(+)</text>
        <dbReference type="Rhea" id="RHEA:13065"/>
        <dbReference type="ChEBI" id="CHEBI:15377"/>
        <dbReference type="ChEBI" id="CHEBI:15378"/>
        <dbReference type="ChEBI" id="CHEBI:30616"/>
        <dbReference type="ChEBI" id="CHEBI:43474"/>
        <dbReference type="ChEBI" id="CHEBI:456216"/>
    </reaction>
</comment>
<comment type="subunit">
    <text evidence="1">Homohexamer. Forms an RuvA(8)-RuvB(12)-Holliday junction (HJ) complex. HJ DNA is sandwiched between 2 RuvA tetramers; dsDNA enters through RuvA and exits via RuvB. An RuvB hexamer assembles on each DNA strand where it exits the tetramer. Each RuvB hexamer is contacted by two RuvA subunits (via domain III) on 2 adjacent RuvB subunits; this complex drives branch migration. In the full resolvosome a probable DNA-RuvA(4)-RuvB(12)-RuvC(2) complex forms which resolves the HJ.</text>
</comment>
<comment type="subcellular location">
    <subcellularLocation>
        <location evidence="1">Cytoplasm</location>
    </subcellularLocation>
</comment>
<comment type="domain">
    <text evidence="1">Has 3 domains, the large (RuvB-L) and small ATPase (RuvB-S) domains and the C-terminal head (RuvB-H) domain. The head domain binds DNA, while the ATPase domains jointly bind ATP, ADP or are empty depending on the state of the subunit in the translocation cycle. During a single DNA translocation step the structure of each domain remains the same, but their relative positions change.</text>
</comment>
<comment type="similarity">
    <text evidence="1">Belongs to the RuvB family.</text>
</comment>
<evidence type="ECO:0000255" key="1">
    <source>
        <dbReference type="HAMAP-Rule" id="MF_00016"/>
    </source>
</evidence>